<accession>O34339</accession>
<feature type="chain" id="PRO_0000389107" description="SPbeta prophage-derived uncharacterized protein YoqI">
    <location>
        <begin position="1"/>
        <end position="64"/>
    </location>
</feature>
<proteinExistence type="predicted"/>
<sequence>MIKSIILPEENTKITVGKPINDESNTKVIAIYDYREEPEEAFWVHLSNGNDLFVDNHEVIVEYE</sequence>
<name>YOQI_BACSU</name>
<protein>
    <recommendedName>
        <fullName>SPbeta prophage-derived uncharacterized protein YoqI</fullName>
    </recommendedName>
</protein>
<reference key="1">
    <citation type="journal article" date="1997" name="Nature">
        <title>The complete genome sequence of the Gram-positive bacterium Bacillus subtilis.</title>
        <authorList>
            <person name="Kunst F."/>
            <person name="Ogasawara N."/>
            <person name="Moszer I."/>
            <person name="Albertini A.M."/>
            <person name="Alloni G."/>
            <person name="Azevedo V."/>
            <person name="Bertero M.G."/>
            <person name="Bessieres P."/>
            <person name="Bolotin A."/>
            <person name="Borchert S."/>
            <person name="Borriss R."/>
            <person name="Boursier L."/>
            <person name="Brans A."/>
            <person name="Braun M."/>
            <person name="Brignell S.C."/>
            <person name="Bron S."/>
            <person name="Brouillet S."/>
            <person name="Bruschi C.V."/>
            <person name="Caldwell B."/>
            <person name="Capuano V."/>
            <person name="Carter N.M."/>
            <person name="Choi S.-K."/>
            <person name="Codani J.-J."/>
            <person name="Connerton I.F."/>
            <person name="Cummings N.J."/>
            <person name="Daniel R.A."/>
            <person name="Denizot F."/>
            <person name="Devine K.M."/>
            <person name="Duesterhoeft A."/>
            <person name="Ehrlich S.D."/>
            <person name="Emmerson P.T."/>
            <person name="Entian K.-D."/>
            <person name="Errington J."/>
            <person name="Fabret C."/>
            <person name="Ferrari E."/>
            <person name="Foulger D."/>
            <person name="Fritz C."/>
            <person name="Fujita M."/>
            <person name="Fujita Y."/>
            <person name="Fuma S."/>
            <person name="Galizzi A."/>
            <person name="Galleron N."/>
            <person name="Ghim S.-Y."/>
            <person name="Glaser P."/>
            <person name="Goffeau A."/>
            <person name="Golightly E.J."/>
            <person name="Grandi G."/>
            <person name="Guiseppi G."/>
            <person name="Guy B.J."/>
            <person name="Haga K."/>
            <person name="Haiech J."/>
            <person name="Harwood C.R."/>
            <person name="Henaut A."/>
            <person name="Hilbert H."/>
            <person name="Holsappel S."/>
            <person name="Hosono S."/>
            <person name="Hullo M.-F."/>
            <person name="Itaya M."/>
            <person name="Jones L.-M."/>
            <person name="Joris B."/>
            <person name="Karamata D."/>
            <person name="Kasahara Y."/>
            <person name="Klaerr-Blanchard M."/>
            <person name="Klein C."/>
            <person name="Kobayashi Y."/>
            <person name="Koetter P."/>
            <person name="Koningstein G."/>
            <person name="Krogh S."/>
            <person name="Kumano M."/>
            <person name="Kurita K."/>
            <person name="Lapidus A."/>
            <person name="Lardinois S."/>
            <person name="Lauber J."/>
            <person name="Lazarevic V."/>
            <person name="Lee S.-M."/>
            <person name="Levine A."/>
            <person name="Liu H."/>
            <person name="Masuda S."/>
            <person name="Mauel C."/>
            <person name="Medigue C."/>
            <person name="Medina N."/>
            <person name="Mellado R.P."/>
            <person name="Mizuno M."/>
            <person name="Moestl D."/>
            <person name="Nakai S."/>
            <person name="Noback M."/>
            <person name="Noone D."/>
            <person name="O'Reilly M."/>
            <person name="Ogawa K."/>
            <person name="Ogiwara A."/>
            <person name="Oudega B."/>
            <person name="Park S.-H."/>
            <person name="Parro V."/>
            <person name="Pohl T.M."/>
            <person name="Portetelle D."/>
            <person name="Porwollik S."/>
            <person name="Prescott A.M."/>
            <person name="Presecan E."/>
            <person name="Pujic P."/>
            <person name="Purnelle B."/>
            <person name="Rapoport G."/>
            <person name="Rey M."/>
            <person name="Reynolds S."/>
            <person name="Rieger M."/>
            <person name="Rivolta C."/>
            <person name="Rocha E."/>
            <person name="Roche B."/>
            <person name="Rose M."/>
            <person name="Sadaie Y."/>
            <person name="Sato T."/>
            <person name="Scanlan E."/>
            <person name="Schleich S."/>
            <person name="Schroeter R."/>
            <person name="Scoffone F."/>
            <person name="Sekiguchi J."/>
            <person name="Sekowska A."/>
            <person name="Seror S.J."/>
            <person name="Serror P."/>
            <person name="Shin B.-S."/>
            <person name="Soldo B."/>
            <person name="Sorokin A."/>
            <person name="Tacconi E."/>
            <person name="Takagi T."/>
            <person name="Takahashi H."/>
            <person name="Takemaru K."/>
            <person name="Takeuchi M."/>
            <person name="Tamakoshi A."/>
            <person name="Tanaka T."/>
            <person name="Terpstra P."/>
            <person name="Tognoni A."/>
            <person name="Tosato V."/>
            <person name="Uchiyama S."/>
            <person name="Vandenbol M."/>
            <person name="Vannier F."/>
            <person name="Vassarotti A."/>
            <person name="Viari A."/>
            <person name="Wambutt R."/>
            <person name="Wedler E."/>
            <person name="Wedler H."/>
            <person name="Weitzenegger T."/>
            <person name="Winters P."/>
            <person name="Wipat A."/>
            <person name="Yamamoto H."/>
            <person name="Yamane K."/>
            <person name="Yasumoto K."/>
            <person name="Yata K."/>
            <person name="Yoshida K."/>
            <person name="Yoshikawa H.-F."/>
            <person name="Zumstein E."/>
            <person name="Yoshikawa H."/>
            <person name="Danchin A."/>
        </authorList>
    </citation>
    <scope>NUCLEOTIDE SEQUENCE [LARGE SCALE GENOMIC DNA]</scope>
    <source>
        <strain>168</strain>
    </source>
</reference>
<keyword id="KW-1185">Reference proteome</keyword>
<dbReference type="EMBL" id="AL009126">
    <property type="protein sequence ID" value="CAB13954.1"/>
    <property type="molecule type" value="Genomic_DNA"/>
</dbReference>
<dbReference type="RefSeq" id="NP_389944.1">
    <property type="nucleotide sequence ID" value="NC_000964.3"/>
</dbReference>
<dbReference type="RefSeq" id="WP_004399432.1">
    <property type="nucleotide sequence ID" value="NZ_OZ025638.1"/>
</dbReference>
<dbReference type="FunCoup" id="O34339">
    <property type="interactions" value="17"/>
</dbReference>
<dbReference type="STRING" id="224308.BSU20620"/>
<dbReference type="PaxDb" id="224308-BSU20620"/>
<dbReference type="EnsemblBacteria" id="CAB13954">
    <property type="protein sequence ID" value="CAB13954"/>
    <property type="gene ID" value="BSU_20620"/>
</dbReference>
<dbReference type="GeneID" id="939965"/>
<dbReference type="KEGG" id="bsu:BSU20620"/>
<dbReference type="PATRIC" id="fig|224308.179.peg.2252"/>
<dbReference type="InParanoid" id="O34339"/>
<dbReference type="OrthoDB" id="2892369at2"/>
<dbReference type="BioCyc" id="BSUB:BSU20620-MONOMER"/>
<dbReference type="Proteomes" id="UP000001570">
    <property type="component" value="Chromosome"/>
</dbReference>
<dbReference type="PROSITE" id="PS00018">
    <property type="entry name" value="EF_HAND_1"/>
    <property type="match status" value="1"/>
</dbReference>
<gene>
    <name type="primary">yoqI</name>
    <name type="ordered locus">BSU20620</name>
</gene>
<organism>
    <name type="scientific">Bacillus subtilis (strain 168)</name>
    <dbReference type="NCBI Taxonomy" id="224308"/>
    <lineage>
        <taxon>Bacteria</taxon>
        <taxon>Bacillati</taxon>
        <taxon>Bacillota</taxon>
        <taxon>Bacilli</taxon>
        <taxon>Bacillales</taxon>
        <taxon>Bacillaceae</taxon>
        <taxon>Bacillus</taxon>
    </lineage>
</organism>